<proteinExistence type="inferred from homology"/>
<gene>
    <name evidence="1" type="primary">rplY</name>
    <name type="ordered locus">BUAPTUC7_137</name>
</gene>
<protein>
    <recommendedName>
        <fullName evidence="1">Large ribosomal subunit protein bL25</fullName>
    </recommendedName>
    <alternativeName>
        <fullName evidence="2">50S ribosomal protein L25</fullName>
    </alternativeName>
</protein>
<organism>
    <name type="scientific">Buchnera aphidicola subsp. Acyrthosiphon pisum (strain Tuc7)</name>
    <dbReference type="NCBI Taxonomy" id="561501"/>
    <lineage>
        <taxon>Bacteria</taxon>
        <taxon>Pseudomonadati</taxon>
        <taxon>Pseudomonadota</taxon>
        <taxon>Gammaproteobacteria</taxon>
        <taxon>Enterobacterales</taxon>
        <taxon>Erwiniaceae</taxon>
        <taxon>Buchnera</taxon>
    </lineage>
</organism>
<keyword id="KW-0687">Ribonucleoprotein</keyword>
<keyword id="KW-0689">Ribosomal protein</keyword>
<keyword id="KW-0694">RNA-binding</keyword>
<keyword id="KW-0699">rRNA-binding</keyword>
<name>RL25_BUCAT</name>
<evidence type="ECO:0000255" key="1">
    <source>
        <dbReference type="HAMAP-Rule" id="MF_01336"/>
    </source>
</evidence>
<evidence type="ECO:0000305" key="2"/>
<reference key="1">
    <citation type="journal article" date="2009" name="Science">
        <title>The dynamics and time scale of ongoing genomic erosion in symbiotic bacteria.</title>
        <authorList>
            <person name="Moran N.A."/>
            <person name="McLaughlin H.J."/>
            <person name="Sorek R."/>
        </authorList>
    </citation>
    <scope>NUCLEOTIDE SEQUENCE [LARGE SCALE GENOMIC DNA]</scope>
    <source>
        <strain>Tuc7</strain>
    </source>
</reference>
<accession>B8D743</accession>
<comment type="function">
    <text evidence="1">This is one of the proteins that binds to the 5S RNA in the ribosome where it forms part of the central protuberance.</text>
</comment>
<comment type="subunit">
    <text evidence="1">Part of the 50S ribosomal subunit; part of the 5S rRNA/L5/L18/L25 subcomplex. Contacts the 5S rRNA. Binds to the 5S rRNA independently of L5 and L18.</text>
</comment>
<comment type="similarity">
    <text evidence="1">Belongs to the bacterial ribosomal protein bL25 family.</text>
</comment>
<feature type="chain" id="PRO_1000166189" description="Large ribosomal subunit protein bL25">
    <location>
        <begin position="1"/>
        <end position="95"/>
    </location>
</feature>
<dbReference type="EMBL" id="CP001158">
    <property type="protein sequence ID" value="ACL29958.1"/>
    <property type="molecule type" value="Genomic_DNA"/>
</dbReference>
<dbReference type="RefSeq" id="WP_009874094.1">
    <property type="nucleotide sequence ID" value="NC_011834.1"/>
</dbReference>
<dbReference type="SMR" id="B8D743"/>
<dbReference type="KEGG" id="bau:BUAPTUC7_137"/>
<dbReference type="HOGENOM" id="CLU_137946_0_0_6"/>
<dbReference type="GO" id="GO:0022625">
    <property type="term" value="C:cytosolic large ribosomal subunit"/>
    <property type="evidence" value="ECO:0007669"/>
    <property type="project" value="TreeGrafter"/>
</dbReference>
<dbReference type="GO" id="GO:0008097">
    <property type="term" value="F:5S rRNA binding"/>
    <property type="evidence" value="ECO:0007669"/>
    <property type="project" value="InterPro"/>
</dbReference>
<dbReference type="GO" id="GO:0003735">
    <property type="term" value="F:structural constituent of ribosome"/>
    <property type="evidence" value="ECO:0007669"/>
    <property type="project" value="InterPro"/>
</dbReference>
<dbReference type="GO" id="GO:0006412">
    <property type="term" value="P:translation"/>
    <property type="evidence" value="ECO:0007669"/>
    <property type="project" value="UniProtKB-UniRule"/>
</dbReference>
<dbReference type="CDD" id="cd00495">
    <property type="entry name" value="Ribosomal_L25_TL5_CTC"/>
    <property type="match status" value="1"/>
</dbReference>
<dbReference type="FunFam" id="2.40.240.10:FF:000002">
    <property type="entry name" value="50S ribosomal protein L25"/>
    <property type="match status" value="1"/>
</dbReference>
<dbReference type="Gene3D" id="2.40.240.10">
    <property type="entry name" value="Ribosomal Protein L25, Chain P"/>
    <property type="match status" value="1"/>
</dbReference>
<dbReference type="HAMAP" id="MF_01336">
    <property type="entry name" value="Ribosomal_bL25"/>
    <property type="match status" value="1"/>
</dbReference>
<dbReference type="InterPro" id="IPR020056">
    <property type="entry name" value="Rbsml_bL25/Gln-tRNA_synth_N"/>
</dbReference>
<dbReference type="InterPro" id="IPR011035">
    <property type="entry name" value="Ribosomal_bL25/Gln-tRNA_synth"/>
</dbReference>
<dbReference type="InterPro" id="IPR020055">
    <property type="entry name" value="Ribosomal_bL25_short"/>
</dbReference>
<dbReference type="InterPro" id="IPR029751">
    <property type="entry name" value="Ribosomal_L25_dom"/>
</dbReference>
<dbReference type="InterPro" id="IPR020930">
    <property type="entry name" value="Ribosomal_uL5_bac-type"/>
</dbReference>
<dbReference type="NCBIfam" id="NF004612">
    <property type="entry name" value="PRK05943.1"/>
    <property type="match status" value="1"/>
</dbReference>
<dbReference type="PANTHER" id="PTHR33284">
    <property type="entry name" value="RIBOSOMAL PROTEIN L25/GLN-TRNA SYNTHETASE, ANTI-CODON-BINDING DOMAIN-CONTAINING PROTEIN"/>
    <property type="match status" value="1"/>
</dbReference>
<dbReference type="PANTHER" id="PTHR33284:SF1">
    <property type="entry name" value="RIBOSOMAL PROTEIN L25_GLN-TRNA SYNTHETASE, ANTI-CODON-BINDING DOMAIN-CONTAINING PROTEIN"/>
    <property type="match status" value="1"/>
</dbReference>
<dbReference type="Pfam" id="PF01386">
    <property type="entry name" value="Ribosomal_L25p"/>
    <property type="match status" value="1"/>
</dbReference>
<dbReference type="SUPFAM" id="SSF50715">
    <property type="entry name" value="Ribosomal protein L25-like"/>
    <property type="match status" value="1"/>
</dbReference>
<sequence>MLTLQAETRKEKGTGFSRRLRIHNKFPAVLYGVKKTEILLILDHNTTFNLQKKIEFYKENLLLCVQDKKYKVKVQAIQRHSFKSKLLHIDFLYVE</sequence>